<protein>
    <recommendedName>
        <fullName evidence="1">L-aspartate dehydrogenase</fullName>
        <ecNumber evidence="1">1.4.1.21</ecNumber>
    </recommendedName>
</protein>
<sequence length="271" mass="28823">MLKIGVIGCGFIGGQICRAIDKGVINAELYALSDSSESKVLELTTCLKRYSPASMTIEELLQNVDFVIESASQKAVRLIVPQALEAGRDVMVMSVGALADEELRKRLFRLAEQNNCKLYFPSGAVAGIDGINSASAAEILSVTLTTRKPPMGLAGAPHVEALGIELETIEKETLLFEGPASEAVKAFPANVNVAATISLAGIGFERTKVRVIADPTLSRNVHEITVEGEFGKLSTRVENLPSPENPKTSYLAALSAISTLKKILSPVQIGT</sequence>
<proteinExistence type="inferred from homology"/>
<keyword id="KW-0520">NAD</keyword>
<keyword id="KW-0521">NADP</keyword>
<keyword id="KW-0560">Oxidoreductase</keyword>
<keyword id="KW-0662">Pyridine nucleotide biosynthesis</keyword>
<reference key="1">
    <citation type="journal article" date="2006" name="J. Bacteriol.">
        <title>The Methanosarcina barkeri genome: comparative analysis with Methanosarcina acetivorans and Methanosarcina mazei reveals extensive rearrangement within methanosarcinal genomes.</title>
        <authorList>
            <person name="Maeder D.L."/>
            <person name="Anderson I."/>
            <person name="Brettin T.S."/>
            <person name="Bruce D.C."/>
            <person name="Gilna P."/>
            <person name="Han C.S."/>
            <person name="Lapidus A."/>
            <person name="Metcalf W.W."/>
            <person name="Saunders E."/>
            <person name="Tapia R."/>
            <person name="Sowers K.R."/>
        </authorList>
    </citation>
    <scope>NUCLEOTIDE SEQUENCE [LARGE SCALE GENOMIC DNA]</scope>
    <source>
        <strain>Fusaro / DSM 804</strain>
    </source>
</reference>
<accession>Q46BD6</accession>
<gene>
    <name evidence="1" type="primary">nadX</name>
    <name type="ordered locus">Mbar_A1866</name>
</gene>
<comment type="function">
    <text evidence="1">Specifically catalyzes the NAD or NADP-dependent dehydrogenation of L-aspartate to iminoaspartate.</text>
</comment>
<comment type="catalytic activity">
    <reaction evidence="1">
        <text>L-aspartate + NADP(+) + H2O = oxaloacetate + NH4(+) + NADPH + H(+)</text>
        <dbReference type="Rhea" id="RHEA:11784"/>
        <dbReference type="ChEBI" id="CHEBI:15377"/>
        <dbReference type="ChEBI" id="CHEBI:15378"/>
        <dbReference type="ChEBI" id="CHEBI:16452"/>
        <dbReference type="ChEBI" id="CHEBI:28938"/>
        <dbReference type="ChEBI" id="CHEBI:29991"/>
        <dbReference type="ChEBI" id="CHEBI:57783"/>
        <dbReference type="ChEBI" id="CHEBI:58349"/>
        <dbReference type="EC" id="1.4.1.21"/>
    </reaction>
</comment>
<comment type="catalytic activity">
    <reaction evidence="1">
        <text>L-aspartate + NAD(+) + H2O = oxaloacetate + NH4(+) + NADH + H(+)</text>
        <dbReference type="Rhea" id="RHEA:11788"/>
        <dbReference type="ChEBI" id="CHEBI:15377"/>
        <dbReference type="ChEBI" id="CHEBI:15378"/>
        <dbReference type="ChEBI" id="CHEBI:16452"/>
        <dbReference type="ChEBI" id="CHEBI:28938"/>
        <dbReference type="ChEBI" id="CHEBI:29991"/>
        <dbReference type="ChEBI" id="CHEBI:57540"/>
        <dbReference type="ChEBI" id="CHEBI:57945"/>
        <dbReference type="EC" id="1.4.1.21"/>
    </reaction>
</comment>
<comment type="pathway">
    <text evidence="1">Cofactor biosynthesis; NAD(+) biosynthesis; iminoaspartate from L-aspartate (dehydrogenase route): step 1/1.</text>
</comment>
<comment type="miscellaneous">
    <text evidence="1">The iminoaspartate product is unstable in aqueous solution and can decompose to oxaloacetate and ammonia.</text>
</comment>
<comment type="similarity">
    <text evidence="1">Belongs to the L-aspartate dehydrogenase family.</text>
</comment>
<dbReference type="EC" id="1.4.1.21" evidence="1"/>
<dbReference type="EMBL" id="CP000099">
    <property type="protein sequence ID" value="AAZ70806.1"/>
    <property type="molecule type" value="Genomic_DNA"/>
</dbReference>
<dbReference type="SMR" id="Q46BD6"/>
<dbReference type="STRING" id="269797.Mbar_A1866"/>
<dbReference type="PaxDb" id="269797-Mbar_A1866"/>
<dbReference type="KEGG" id="mba:Mbar_A1866"/>
<dbReference type="eggNOG" id="arCOG00254">
    <property type="taxonomic scope" value="Archaea"/>
</dbReference>
<dbReference type="HOGENOM" id="CLU_089550_0_0_2"/>
<dbReference type="OrthoDB" id="15415at2157"/>
<dbReference type="UniPathway" id="UPA00253">
    <property type="reaction ID" value="UER00456"/>
</dbReference>
<dbReference type="GO" id="GO:0033735">
    <property type="term" value="F:aspartate dehydrogenase activity"/>
    <property type="evidence" value="ECO:0007669"/>
    <property type="project" value="UniProtKB-EC"/>
</dbReference>
<dbReference type="GO" id="GO:0051287">
    <property type="term" value="F:NAD binding"/>
    <property type="evidence" value="ECO:0007669"/>
    <property type="project" value="UniProtKB-UniRule"/>
</dbReference>
<dbReference type="GO" id="GO:0050661">
    <property type="term" value="F:NADP binding"/>
    <property type="evidence" value="ECO:0007669"/>
    <property type="project" value="UniProtKB-UniRule"/>
</dbReference>
<dbReference type="GO" id="GO:0016639">
    <property type="term" value="F:oxidoreductase activity, acting on the CH-NH2 group of donors, NAD or NADP as acceptor"/>
    <property type="evidence" value="ECO:0007669"/>
    <property type="project" value="UniProtKB-UniRule"/>
</dbReference>
<dbReference type="GO" id="GO:0009435">
    <property type="term" value="P:NAD biosynthetic process"/>
    <property type="evidence" value="ECO:0007669"/>
    <property type="project" value="UniProtKB-UniRule"/>
</dbReference>
<dbReference type="Gene3D" id="3.30.360.10">
    <property type="entry name" value="Dihydrodipicolinate Reductase, domain 2"/>
    <property type="match status" value="1"/>
</dbReference>
<dbReference type="Gene3D" id="3.40.50.720">
    <property type="entry name" value="NAD(P)-binding Rossmann-like Domain"/>
    <property type="match status" value="1"/>
</dbReference>
<dbReference type="HAMAP" id="MF_01265">
    <property type="entry name" value="NadX"/>
    <property type="match status" value="1"/>
</dbReference>
<dbReference type="InterPro" id="IPR005106">
    <property type="entry name" value="Asp/hSer_DH_NAD-bd"/>
</dbReference>
<dbReference type="InterPro" id="IPR002811">
    <property type="entry name" value="Asp_DH"/>
</dbReference>
<dbReference type="InterPro" id="IPR022487">
    <property type="entry name" value="Asp_DH_arc"/>
</dbReference>
<dbReference type="InterPro" id="IPR020626">
    <property type="entry name" value="Asp_DH_prok"/>
</dbReference>
<dbReference type="InterPro" id="IPR011182">
    <property type="entry name" value="L-Asp_DH"/>
</dbReference>
<dbReference type="InterPro" id="IPR036291">
    <property type="entry name" value="NAD(P)-bd_dom_sf"/>
</dbReference>
<dbReference type="NCBIfam" id="TIGR03855">
    <property type="entry name" value="NAD_NadX"/>
    <property type="match status" value="1"/>
</dbReference>
<dbReference type="NCBIfam" id="NF009828">
    <property type="entry name" value="PRK13303.1-3"/>
    <property type="match status" value="1"/>
</dbReference>
<dbReference type="NCBIfam" id="NF009829">
    <property type="entry name" value="PRK13303.1-4"/>
    <property type="match status" value="1"/>
</dbReference>
<dbReference type="NCBIfam" id="NF009830">
    <property type="entry name" value="PRK13304.1"/>
    <property type="match status" value="1"/>
</dbReference>
<dbReference type="PANTHER" id="PTHR31873:SF6">
    <property type="entry name" value="ASPARTATE DEHYDROGENASE DOMAIN-CONTAINING PROTEIN"/>
    <property type="match status" value="1"/>
</dbReference>
<dbReference type="PANTHER" id="PTHR31873">
    <property type="entry name" value="L-ASPARTATE DEHYDROGENASE-RELATED"/>
    <property type="match status" value="1"/>
</dbReference>
<dbReference type="Pfam" id="PF01958">
    <property type="entry name" value="Asp_DH_C"/>
    <property type="match status" value="1"/>
</dbReference>
<dbReference type="Pfam" id="PF03447">
    <property type="entry name" value="NAD_binding_3"/>
    <property type="match status" value="1"/>
</dbReference>
<dbReference type="PIRSF" id="PIRSF005227">
    <property type="entry name" value="Asp_dh_NAD_syn"/>
    <property type="match status" value="1"/>
</dbReference>
<dbReference type="SUPFAM" id="SSF55347">
    <property type="entry name" value="Glyceraldehyde-3-phosphate dehydrogenase-like, C-terminal domain"/>
    <property type="match status" value="1"/>
</dbReference>
<dbReference type="SUPFAM" id="SSF51735">
    <property type="entry name" value="NAD(P)-binding Rossmann-fold domains"/>
    <property type="match status" value="1"/>
</dbReference>
<name>ASPD_METBF</name>
<evidence type="ECO:0000255" key="1">
    <source>
        <dbReference type="HAMAP-Rule" id="MF_01265"/>
    </source>
</evidence>
<feature type="chain" id="PRO_1000067303" description="L-aspartate dehydrogenase">
    <location>
        <begin position="1"/>
        <end position="271"/>
    </location>
</feature>
<feature type="active site" evidence="1">
    <location>
        <position position="222"/>
    </location>
</feature>
<feature type="binding site" evidence="1">
    <location>
        <position position="124"/>
    </location>
    <ligand>
        <name>NAD(+)</name>
        <dbReference type="ChEBI" id="CHEBI:57540"/>
    </ligand>
</feature>
<feature type="binding site" evidence="1">
    <location>
        <position position="192"/>
    </location>
    <ligand>
        <name>NAD(+)</name>
        <dbReference type="ChEBI" id="CHEBI:57540"/>
    </ligand>
</feature>
<organism>
    <name type="scientific">Methanosarcina barkeri (strain Fusaro / DSM 804)</name>
    <dbReference type="NCBI Taxonomy" id="269797"/>
    <lineage>
        <taxon>Archaea</taxon>
        <taxon>Methanobacteriati</taxon>
        <taxon>Methanobacteriota</taxon>
        <taxon>Stenosarchaea group</taxon>
        <taxon>Methanomicrobia</taxon>
        <taxon>Methanosarcinales</taxon>
        <taxon>Methanosarcinaceae</taxon>
        <taxon>Methanosarcina</taxon>
    </lineage>
</organism>